<organism>
    <name type="scientific">Yersinia pseudotuberculosis serotype O:3 (strain YPIII)</name>
    <dbReference type="NCBI Taxonomy" id="502800"/>
    <lineage>
        <taxon>Bacteria</taxon>
        <taxon>Pseudomonadati</taxon>
        <taxon>Pseudomonadota</taxon>
        <taxon>Gammaproteobacteria</taxon>
        <taxon>Enterobacterales</taxon>
        <taxon>Yersiniaceae</taxon>
        <taxon>Yersinia</taxon>
    </lineage>
</organism>
<evidence type="ECO:0000255" key="1">
    <source>
        <dbReference type="HAMAP-Rule" id="MF_01192"/>
    </source>
</evidence>
<proteinExistence type="inferred from homology"/>
<protein>
    <recommendedName>
        <fullName evidence="1">Flap endonuclease Xni</fullName>
        <shortName evidence="1">FEN</shortName>
        <ecNumber evidence="1">3.1.-.-</ecNumber>
    </recommendedName>
</protein>
<keyword id="KW-0238">DNA-binding</keyword>
<keyword id="KW-0255">Endonuclease</keyword>
<keyword id="KW-0378">Hydrolase</keyword>
<keyword id="KW-0460">Magnesium</keyword>
<keyword id="KW-0479">Metal-binding</keyword>
<keyword id="KW-0540">Nuclease</keyword>
<keyword id="KW-0630">Potassium</keyword>
<dbReference type="EC" id="3.1.-.-" evidence="1"/>
<dbReference type="EMBL" id="CP000950">
    <property type="protein sequence ID" value="ACA67356.1"/>
    <property type="molecule type" value="Genomic_DNA"/>
</dbReference>
<dbReference type="RefSeq" id="WP_011192868.1">
    <property type="nucleotide sequence ID" value="NZ_CP009792.1"/>
</dbReference>
<dbReference type="SMR" id="B1JQE9"/>
<dbReference type="GeneID" id="49784967"/>
<dbReference type="KEGG" id="ypy:YPK_1055"/>
<dbReference type="PATRIC" id="fig|502800.11.peg.1687"/>
<dbReference type="GO" id="GO:0008409">
    <property type="term" value="F:5'-3' exonuclease activity"/>
    <property type="evidence" value="ECO:0007669"/>
    <property type="project" value="InterPro"/>
</dbReference>
<dbReference type="GO" id="GO:0017108">
    <property type="term" value="F:5'-flap endonuclease activity"/>
    <property type="evidence" value="ECO:0007669"/>
    <property type="project" value="UniProtKB-UniRule"/>
</dbReference>
<dbReference type="GO" id="GO:0003677">
    <property type="term" value="F:DNA binding"/>
    <property type="evidence" value="ECO:0007669"/>
    <property type="project" value="UniProtKB-UniRule"/>
</dbReference>
<dbReference type="GO" id="GO:0000287">
    <property type="term" value="F:magnesium ion binding"/>
    <property type="evidence" value="ECO:0007669"/>
    <property type="project" value="UniProtKB-UniRule"/>
</dbReference>
<dbReference type="GO" id="GO:0030955">
    <property type="term" value="F:potassium ion binding"/>
    <property type="evidence" value="ECO:0007669"/>
    <property type="project" value="UniProtKB-UniRule"/>
</dbReference>
<dbReference type="GO" id="GO:0033567">
    <property type="term" value="P:DNA replication, Okazaki fragment processing"/>
    <property type="evidence" value="ECO:0007669"/>
    <property type="project" value="UniProtKB-UniRule"/>
</dbReference>
<dbReference type="CDD" id="cd09898">
    <property type="entry name" value="H3TH_53EXO"/>
    <property type="match status" value="1"/>
</dbReference>
<dbReference type="CDD" id="cd09859">
    <property type="entry name" value="PIN_53EXO"/>
    <property type="match status" value="1"/>
</dbReference>
<dbReference type="FunFam" id="1.10.150.20:FF:000003">
    <property type="entry name" value="DNA polymerase I"/>
    <property type="match status" value="1"/>
</dbReference>
<dbReference type="FunFam" id="3.40.50.1010:FF:000011">
    <property type="entry name" value="Flap endonuclease Xni"/>
    <property type="match status" value="1"/>
</dbReference>
<dbReference type="Gene3D" id="1.10.150.20">
    <property type="entry name" value="5' to 3' exonuclease, C-terminal subdomain"/>
    <property type="match status" value="1"/>
</dbReference>
<dbReference type="Gene3D" id="3.40.50.1010">
    <property type="entry name" value="5'-nuclease"/>
    <property type="match status" value="1"/>
</dbReference>
<dbReference type="HAMAP" id="MF_01192">
    <property type="entry name" value="Xni"/>
    <property type="match status" value="1"/>
</dbReference>
<dbReference type="InterPro" id="IPR020046">
    <property type="entry name" value="5-3_exonucl_a-hlix_arch_N"/>
</dbReference>
<dbReference type="InterPro" id="IPR002421">
    <property type="entry name" value="5-3_exonuclease"/>
</dbReference>
<dbReference type="InterPro" id="IPR036279">
    <property type="entry name" value="5-3_exonuclease_C_sf"/>
</dbReference>
<dbReference type="InterPro" id="IPR020045">
    <property type="entry name" value="DNA_polI_H3TH"/>
</dbReference>
<dbReference type="InterPro" id="IPR038969">
    <property type="entry name" value="FEN"/>
</dbReference>
<dbReference type="InterPro" id="IPR008918">
    <property type="entry name" value="HhH2"/>
</dbReference>
<dbReference type="InterPro" id="IPR029060">
    <property type="entry name" value="PIN-like_dom_sf"/>
</dbReference>
<dbReference type="InterPro" id="IPR022895">
    <property type="entry name" value="Xni"/>
</dbReference>
<dbReference type="NCBIfam" id="NF007017">
    <property type="entry name" value="PRK09482.1"/>
    <property type="match status" value="1"/>
</dbReference>
<dbReference type="PANTHER" id="PTHR42646:SF2">
    <property type="entry name" value="5'-3' EXONUCLEASE FAMILY PROTEIN"/>
    <property type="match status" value="1"/>
</dbReference>
<dbReference type="PANTHER" id="PTHR42646">
    <property type="entry name" value="FLAP ENDONUCLEASE XNI"/>
    <property type="match status" value="1"/>
</dbReference>
<dbReference type="Pfam" id="PF01367">
    <property type="entry name" value="5_3_exonuc"/>
    <property type="match status" value="1"/>
</dbReference>
<dbReference type="Pfam" id="PF02739">
    <property type="entry name" value="5_3_exonuc_N"/>
    <property type="match status" value="1"/>
</dbReference>
<dbReference type="SMART" id="SM00475">
    <property type="entry name" value="53EXOc"/>
    <property type="match status" value="1"/>
</dbReference>
<dbReference type="SMART" id="SM00279">
    <property type="entry name" value="HhH2"/>
    <property type="match status" value="1"/>
</dbReference>
<dbReference type="SUPFAM" id="SSF47807">
    <property type="entry name" value="5' to 3' exonuclease, C-terminal subdomain"/>
    <property type="match status" value="1"/>
</dbReference>
<dbReference type="SUPFAM" id="SSF88723">
    <property type="entry name" value="PIN domain-like"/>
    <property type="match status" value="1"/>
</dbReference>
<sequence length="251" mass="28146">MQIHLLIVDALNLIRRIHAVQGSPCVKACQHALQQLIQHSQPSHAVAVFDEDDRSDSWRHQCLPDYKAGRSPMPDNLQQEMPLIRQAFNELGVACWHSPGNEADDLAATLVVKVAGAGHQVTIVSTDKGYCQLLAPNVQIRDYFQKRWLDMPFVKQEFGVLPRQLPDYWGLAGISSSKIPGVAGVGAKTATLLLQQADTLEVLYQNLESIPEKWRKKLQQHQQMAFTCKQIATLKTDLLLSGNLQQLRLKK</sequence>
<reference key="1">
    <citation type="submission" date="2008-02" db="EMBL/GenBank/DDBJ databases">
        <title>Complete sequence of Yersinia pseudotuberculosis YPIII.</title>
        <authorList>
            <consortium name="US DOE Joint Genome Institute"/>
            <person name="Copeland A."/>
            <person name="Lucas S."/>
            <person name="Lapidus A."/>
            <person name="Glavina del Rio T."/>
            <person name="Dalin E."/>
            <person name="Tice H."/>
            <person name="Bruce D."/>
            <person name="Goodwin L."/>
            <person name="Pitluck S."/>
            <person name="Munk A.C."/>
            <person name="Brettin T."/>
            <person name="Detter J.C."/>
            <person name="Han C."/>
            <person name="Tapia R."/>
            <person name="Schmutz J."/>
            <person name="Larimer F."/>
            <person name="Land M."/>
            <person name="Hauser L."/>
            <person name="Challacombe J.F."/>
            <person name="Green L."/>
            <person name="Lindler L.E."/>
            <person name="Nikolich M.P."/>
            <person name="Richardson P."/>
        </authorList>
    </citation>
    <scope>NUCLEOTIDE SEQUENCE [LARGE SCALE GENOMIC DNA]</scope>
    <source>
        <strain>YPIII</strain>
    </source>
</reference>
<name>XNI_YERPY</name>
<feature type="chain" id="PRO_1000138399" description="Flap endonuclease Xni">
    <location>
        <begin position="1"/>
        <end position="251"/>
    </location>
</feature>
<feature type="domain" description="5'-3' exonuclease" evidence="1">
    <location>
        <begin position="160"/>
        <end position="250"/>
    </location>
</feature>
<feature type="region of interest" description="Interaction with DNA" evidence="1">
    <location>
        <begin position="184"/>
        <end position="189"/>
    </location>
</feature>
<feature type="binding site" evidence="1">
    <location>
        <position position="104"/>
    </location>
    <ligand>
        <name>Mg(2+)</name>
        <dbReference type="ChEBI" id="CHEBI:18420"/>
    </ligand>
</feature>
<feature type="binding site" evidence="1">
    <location>
        <position position="171"/>
    </location>
    <ligand>
        <name>K(+)</name>
        <dbReference type="ChEBI" id="CHEBI:29103"/>
    </ligand>
</feature>
<feature type="binding site" evidence="1">
    <location>
        <position position="172"/>
    </location>
    <ligand>
        <name>K(+)</name>
        <dbReference type="ChEBI" id="CHEBI:29103"/>
    </ligand>
</feature>
<feature type="binding site" evidence="1">
    <location>
        <position position="180"/>
    </location>
    <ligand>
        <name>K(+)</name>
        <dbReference type="ChEBI" id="CHEBI:29103"/>
    </ligand>
</feature>
<feature type="binding site" evidence="1">
    <location>
        <position position="182"/>
    </location>
    <ligand>
        <name>K(+)</name>
        <dbReference type="ChEBI" id="CHEBI:29103"/>
    </ligand>
</feature>
<feature type="binding site" evidence="1">
    <location>
        <position position="185"/>
    </location>
    <ligand>
        <name>K(+)</name>
        <dbReference type="ChEBI" id="CHEBI:29103"/>
    </ligand>
</feature>
<gene>
    <name evidence="1" type="primary">xni</name>
    <name evidence="1" type="synonym">ygdG</name>
    <name type="ordered locus">YPK_1055</name>
</gene>
<accession>B1JQE9</accession>
<comment type="function">
    <text evidence="1">Has flap endonuclease activity. During DNA replication, flap endonucleases cleave the 5'-overhanging flap structure that is generated by displacement synthesis when DNA polymerase encounters the 5'-end of a downstream Okazaki fragment.</text>
</comment>
<comment type="cofactor">
    <cofactor evidence="1">
        <name>Mg(2+)</name>
        <dbReference type="ChEBI" id="CHEBI:18420"/>
    </cofactor>
    <text evidence="1">Binds 2 Mg(2+) per subunit. Only one magnesium ion has a direct interaction with the protein, the other interactions are indirect.</text>
</comment>
<comment type="cofactor">
    <cofactor evidence="1">
        <name>K(+)</name>
        <dbReference type="ChEBI" id="CHEBI:29103"/>
    </cofactor>
    <text evidence="1">Binds 1 K(+) per subunit. The potassium ion strongly increases the affinity for DNA.</text>
</comment>
<comment type="similarity">
    <text evidence="1">Belongs to the Xni family.</text>
</comment>